<dbReference type="EC" id="2.3.1.245" evidence="1"/>
<dbReference type="EMBL" id="CP000647">
    <property type="protein sequence ID" value="ABR78898.1"/>
    <property type="molecule type" value="Genomic_DNA"/>
</dbReference>
<dbReference type="RefSeq" id="WP_002917724.1">
    <property type="nucleotide sequence ID" value="NC_009648.1"/>
</dbReference>
<dbReference type="SMR" id="A6TEB4"/>
<dbReference type="STRING" id="272620.KPN_03503"/>
<dbReference type="jPOST" id="A6TEB4"/>
<dbReference type="PaxDb" id="272620-KPN_03503"/>
<dbReference type="EnsemblBacteria" id="ABR78898">
    <property type="protein sequence ID" value="ABR78898"/>
    <property type="gene ID" value="KPN_03503"/>
</dbReference>
<dbReference type="GeneID" id="93313911"/>
<dbReference type="KEGG" id="kpn:KPN_03503"/>
<dbReference type="HOGENOM" id="CLU_057069_1_0_6"/>
<dbReference type="Proteomes" id="UP000000265">
    <property type="component" value="Chromosome"/>
</dbReference>
<dbReference type="GO" id="GO:0005737">
    <property type="term" value="C:cytoplasm"/>
    <property type="evidence" value="ECO:0007669"/>
    <property type="project" value="UniProtKB-SubCell"/>
</dbReference>
<dbReference type="GO" id="GO:0016747">
    <property type="term" value="F:acyltransferase activity, transferring groups other than amino-acyl groups"/>
    <property type="evidence" value="ECO:0007669"/>
    <property type="project" value="UniProtKB-UniRule"/>
</dbReference>
<dbReference type="GO" id="GO:0004332">
    <property type="term" value="F:fructose-bisphosphate aldolase activity"/>
    <property type="evidence" value="ECO:0007669"/>
    <property type="project" value="InterPro"/>
</dbReference>
<dbReference type="CDD" id="cd00958">
    <property type="entry name" value="DhnA"/>
    <property type="match status" value="1"/>
</dbReference>
<dbReference type="Gene3D" id="3.20.20.70">
    <property type="entry name" value="Aldolase class I"/>
    <property type="match status" value="1"/>
</dbReference>
<dbReference type="HAMAP" id="MF_02052">
    <property type="entry name" value="LsrF"/>
    <property type="match status" value="1"/>
</dbReference>
<dbReference type="InterPro" id="IPR013785">
    <property type="entry name" value="Aldolase_TIM"/>
</dbReference>
<dbReference type="InterPro" id="IPR002915">
    <property type="entry name" value="DeoC/FbaB/LacD_aldolase"/>
</dbReference>
<dbReference type="InterPro" id="IPR050456">
    <property type="entry name" value="DeoC/FbaB_aldolase"/>
</dbReference>
<dbReference type="InterPro" id="IPR041720">
    <property type="entry name" value="FbaB-like"/>
</dbReference>
<dbReference type="InterPro" id="IPR033673">
    <property type="entry name" value="LsrF"/>
</dbReference>
<dbReference type="NCBIfam" id="NF006081">
    <property type="entry name" value="PRK08227.1"/>
    <property type="match status" value="1"/>
</dbReference>
<dbReference type="PANTHER" id="PTHR47916:SF1">
    <property type="entry name" value="3-HYDROXY-5-PHOSPHONOOXYPENTANE-2,4-DIONE THIOLASE"/>
    <property type="match status" value="1"/>
</dbReference>
<dbReference type="PANTHER" id="PTHR47916">
    <property type="entry name" value="FRUCTOSE-BISPHOSPHATE ALDOLASE CLASS 1"/>
    <property type="match status" value="1"/>
</dbReference>
<dbReference type="Pfam" id="PF01791">
    <property type="entry name" value="DeoC"/>
    <property type="match status" value="1"/>
</dbReference>
<dbReference type="PIRSF" id="PIRSF038992">
    <property type="entry name" value="Aldolase_Ia"/>
    <property type="match status" value="1"/>
</dbReference>
<dbReference type="SMART" id="SM01133">
    <property type="entry name" value="DeoC"/>
    <property type="match status" value="1"/>
</dbReference>
<dbReference type="SUPFAM" id="SSF51569">
    <property type="entry name" value="Aldolase"/>
    <property type="match status" value="1"/>
</dbReference>
<evidence type="ECO:0000255" key="1">
    <source>
        <dbReference type="HAMAP-Rule" id="MF_02052"/>
    </source>
</evidence>
<reference key="1">
    <citation type="submission" date="2006-09" db="EMBL/GenBank/DDBJ databases">
        <authorList>
            <consortium name="The Klebsiella pneumonia Genome Sequencing Project"/>
            <person name="McClelland M."/>
            <person name="Sanderson E.K."/>
            <person name="Spieth J."/>
            <person name="Clifton W.S."/>
            <person name="Latreille P."/>
            <person name="Sabo A."/>
            <person name="Pepin K."/>
            <person name="Bhonagiri V."/>
            <person name="Porwollik S."/>
            <person name="Ali J."/>
            <person name="Wilson R.K."/>
        </authorList>
    </citation>
    <scope>NUCLEOTIDE SEQUENCE [LARGE SCALE GENOMIC DNA]</scope>
    <source>
        <strain>ATCC 700721 / MGH 78578</strain>
    </source>
</reference>
<organism>
    <name type="scientific">Klebsiella pneumoniae subsp. pneumoniae (strain ATCC 700721 / MGH 78578)</name>
    <dbReference type="NCBI Taxonomy" id="272620"/>
    <lineage>
        <taxon>Bacteria</taxon>
        <taxon>Pseudomonadati</taxon>
        <taxon>Pseudomonadota</taxon>
        <taxon>Gammaproteobacteria</taxon>
        <taxon>Enterobacterales</taxon>
        <taxon>Enterobacteriaceae</taxon>
        <taxon>Klebsiella/Raoultella group</taxon>
        <taxon>Klebsiella</taxon>
        <taxon>Klebsiella pneumoniae complex</taxon>
    </lineage>
</organism>
<keyword id="KW-0963">Cytoplasm</keyword>
<keyword id="KW-0704">Schiff base</keyword>
<keyword id="KW-0808">Transferase</keyword>
<proteinExistence type="inferred from homology"/>
<sequence length="295" mass="32411">MADLDDIKEGKDFGIDRPQQNTLYTLKGCGSLDWGMQSRLARIFNPHSNRTVMLAFDHGYFQGPTTGLERIDLSIAPLFADTDVLMCTRGVLRSQVPAATNKPVVLRASGGNSILSELSNECVAVAMEDALRLNVCAVAAQVYIGSEYEHQSINNIIKLVDAGNRYGMPVLAVTGVGKEMTRDARYFSLASRIAAEMGAQFVKTYFVEEGFEKVTASCPVPIVIAGGKKLPEHEALEMCWRAIDQGASGVDMGRNIFQSSAPRAMLKAVKKVVHENLNAREAYQFWQEEKQGELK</sequence>
<gene>
    <name evidence="1" type="primary">lsrF</name>
    <name type="ordered locus">KPN78578_34740</name>
    <name type="ORF">KPN_03503</name>
</gene>
<comment type="function">
    <text evidence="1">Involved in the degradation of phospho-AI-2, thereby terminating induction of the lsr operon and closing the AI-2 signaling cycle. Catalyzes the transfer of an acetyl moiety from 3-hydroxy-5-phosphonooxypentane-2,4-dione to CoA to form glycerone phosphate and acetyl-CoA.</text>
</comment>
<comment type="catalytic activity">
    <reaction evidence="1">
        <text>dihydroxyacetone phosphate + acetyl-CoA = 3-hydroxy-2,4-dioxopentyl phosphate + CoA</text>
        <dbReference type="Rhea" id="RHEA:44736"/>
        <dbReference type="ChEBI" id="CHEBI:57287"/>
        <dbReference type="ChEBI" id="CHEBI:57288"/>
        <dbReference type="ChEBI" id="CHEBI:57642"/>
        <dbReference type="ChEBI" id="CHEBI:84359"/>
        <dbReference type="EC" id="2.3.1.245"/>
    </reaction>
</comment>
<comment type="subunit">
    <text evidence="1">Homodecamer.</text>
</comment>
<comment type="subcellular location">
    <subcellularLocation>
        <location evidence="1">Cytoplasm</location>
    </subcellularLocation>
</comment>
<comment type="similarity">
    <text evidence="1">Belongs to the DeoC/FbaB aldolase family.</text>
</comment>
<name>LSRF_KLEP7</name>
<feature type="chain" id="PRO_0000351524" description="3-hydroxy-5-phosphonooxypentane-2,4-dione thiolase">
    <location>
        <begin position="1"/>
        <end position="295"/>
    </location>
</feature>
<feature type="active site" description="Schiff-base intermediate with substrate" evidence="1">
    <location>
        <position position="203"/>
    </location>
</feature>
<accession>A6TEB4</accession>
<protein>
    <recommendedName>
        <fullName evidence="1">3-hydroxy-5-phosphonooxypentane-2,4-dione thiolase</fullName>
        <ecNumber evidence="1">2.3.1.245</ecNumber>
    </recommendedName>
</protein>